<sequence>MKGRSALLRALWIAALSFGLGGVAVAAEPTAKAAPYENLMVPSPSMGRDIPVAFLAGGPHAVYLLDAFNAGPDVSNWVTAGNAMNTLAGKGISVVAPAGGAYSMYTNWEQDGSKQWDTFLSAELPDWLAANRGLAPGGHAAVGAAQGGYGAMALAAFHPDRFGFAGSMSGFLYPSNTTTNGAIAAGMQQFGGVDTNGMWGAPQLGRWKWHDPWVHASLLAQNNTRVWVWSPTNPGASDPAAMIGQAAEAMGNSRMFYNQYRSVGGHNGHFDFPASGDNGWGSWAPQLGAMSGDIVGAIR</sequence>
<reference key="1">
    <citation type="journal article" date="1995" name="Scand. J. Immunol.">
        <title>Characterization of the gene encoding the MPB51, one of the major secreted protein antigens of Mycobacterium bovis BCG, and identification of the secreted protein closely related to the fibronectin binding 85 complex.</title>
        <authorList>
            <person name="Ohara N."/>
            <person name="Kitaura H."/>
            <person name="Hotokezaka H."/>
            <person name="Nishiyama T."/>
            <person name="Wada N."/>
            <person name="Matsumoto S."/>
            <person name="Matsuo T."/>
            <person name="Naito M."/>
            <person name="Yamada T."/>
        </authorList>
    </citation>
    <scope>NUCLEOTIDE SEQUENCE [GENOMIC DNA]</scope>
    <source>
        <strain>BCG / Tokyo</strain>
    </source>
</reference>
<reference key="2">
    <citation type="journal article" date="2003" name="Proc. Natl. Acad. Sci. U.S.A.">
        <title>The complete genome sequence of Mycobacterium bovis.</title>
        <authorList>
            <person name="Garnier T."/>
            <person name="Eiglmeier K."/>
            <person name="Camus J.-C."/>
            <person name="Medina N."/>
            <person name="Mansoor H."/>
            <person name="Pryor M."/>
            <person name="Duthoy S."/>
            <person name="Grondin S."/>
            <person name="Lacroix C."/>
            <person name="Monsempe C."/>
            <person name="Simon S."/>
            <person name="Harris B."/>
            <person name="Atkin R."/>
            <person name="Doggett J."/>
            <person name="Mayes R."/>
            <person name="Keating L."/>
            <person name="Wheeler P.R."/>
            <person name="Parkhill J."/>
            <person name="Barrell B.G."/>
            <person name="Cole S.T."/>
            <person name="Gordon S.V."/>
            <person name="Hewinson R.G."/>
        </authorList>
    </citation>
    <scope>NUCLEOTIDE SEQUENCE [LARGE SCALE GENOMIC DNA]</scope>
    <source>
        <strain>ATCC BAA-935 / AF2122/97</strain>
    </source>
</reference>
<reference key="3">
    <citation type="journal article" date="2017" name="Genome Announc.">
        <title>Updated reference genome sequence and annotation of Mycobacterium bovis AF2122/97.</title>
        <authorList>
            <person name="Malone K.M."/>
            <person name="Farrell D."/>
            <person name="Stuber T.P."/>
            <person name="Schubert O.T."/>
            <person name="Aebersold R."/>
            <person name="Robbe-Austerman S."/>
            <person name="Gordon S.V."/>
        </authorList>
    </citation>
    <scope>NUCLEOTIDE SEQUENCE [LARGE SCALE GENOMIC DNA]</scope>
    <scope>GENOME REANNOTATION</scope>
    <source>
        <strain>ATCC BAA-935 / AF2122/97</strain>
    </source>
</reference>
<feature type="signal peptide" evidence="2">
    <location>
        <begin position="1"/>
        <end position="26"/>
    </location>
</feature>
<feature type="chain" id="PRO_0000000228" description="MPT51/MPB51 antigen">
    <location>
        <begin position="27"/>
        <end position="299"/>
    </location>
</feature>
<dbReference type="EMBL" id="D26486">
    <property type="protein sequence ID" value="BAA05497.1"/>
    <property type="molecule type" value="Genomic_DNA"/>
</dbReference>
<dbReference type="EMBL" id="LT708304">
    <property type="protein sequence ID" value="SIU02462.1"/>
    <property type="molecule type" value="Genomic_DNA"/>
</dbReference>
<dbReference type="RefSeq" id="NP_857470.1">
    <property type="nucleotide sequence ID" value="NC_002945.3"/>
</dbReference>
<dbReference type="RefSeq" id="WP_003420783.1">
    <property type="nucleotide sequence ID" value="NC_002945.4"/>
</dbReference>
<dbReference type="SMR" id="P0A4V7"/>
<dbReference type="ESTHER" id="myctu-mpt51">
    <property type="family name" value="A85-Mycolyl-transferase"/>
</dbReference>
<dbReference type="KEGG" id="mbo:BQ2027_MB3833C"/>
<dbReference type="PATRIC" id="fig|233413.5.peg.4191"/>
<dbReference type="Proteomes" id="UP000001419">
    <property type="component" value="Chromosome"/>
</dbReference>
<dbReference type="GO" id="GO:0005576">
    <property type="term" value="C:extracellular region"/>
    <property type="evidence" value="ECO:0007669"/>
    <property type="project" value="UniProtKB-SubCell"/>
</dbReference>
<dbReference type="GO" id="GO:0016747">
    <property type="term" value="F:acyltransferase activity, transferring groups other than amino-acyl groups"/>
    <property type="evidence" value="ECO:0007669"/>
    <property type="project" value="TreeGrafter"/>
</dbReference>
<dbReference type="FunFam" id="3.40.50.1820:FF:000086">
    <property type="entry name" value="Diacylglycerol acyltransferase/mycolyltransferase Ag85C"/>
    <property type="match status" value="1"/>
</dbReference>
<dbReference type="Gene3D" id="3.40.50.1820">
    <property type="entry name" value="alpha/beta hydrolase"/>
    <property type="match status" value="1"/>
</dbReference>
<dbReference type="InterPro" id="IPR029058">
    <property type="entry name" value="AB_hydrolase_fold"/>
</dbReference>
<dbReference type="InterPro" id="IPR000801">
    <property type="entry name" value="Esterase-like"/>
</dbReference>
<dbReference type="InterPro" id="IPR050583">
    <property type="entry name" value="Mycobacterial_A85_antigen"/>
</dbReference>
<dbReference type="PANTHER" id="PTHR48098:SF1">
    <property type="entry name" value="DIACYLGLYCEROL ACYLTRANSFERASE_MYCOLYLTRANSFERASE AG85A"/>
    <property type="match status" value="1"/>
</dbReference>
<dbReference type="PANTHER" id="PTHR48098">
    <property type="entry name" value="ENTEROCHELIN ESTERASE-RELATED"/>
    <property type="match status" value="1"/>
</dbReference>
<dbReference type="Pfam" id="PF00756">
    <property type="entry name" value="Esterase"/>
    <property type="match status" value="1"/>
</dbReference>
<dbReference type="SUPFAM" id="SSF53474">
    <property type="entry name" value="alpha/beta-Hydrolases"/>
    <property type="match status" value="1"/>
</dbReference>
<comment type="function">
    <text evidence="1">May have a role in host tissue attachment, whereby ligands may include the serum protein fibronectin and small sugars.</text>
</comment>
<comment type="subunit">
    <text evidence="1">Homodimer.</text>
</comment>
<comment type="subcellular location">
    <subcellularLocation>
        <location evidence="1">Secreted</location>
    </subcellularLocation>
</comment>
<comment type="similarity">
    <text evidence="3">Belongs to the mycobacterial A85 antigen family.</text>
</comment>
<gene>
    <name type="primary">mpt51</name>
    <name type="synonym">fbpD</name>
    <name type="synonym">mpb51</name>
    <name type="ordered locus">BQ2027_MB3833C</name>
</gene>
<name>MPT51_MYCBO</name>
<evidence type="ECO:0000250" key="1"/>
<evidence type="ECO:0000255" key="2"/>
<evidence type="ECO:0000305" key="3"/>
<keyword id="KW-0012">Acyltransferase</keyword>
<keyword id="KW-1185">Reference proteome</keyword>
<keyword id="KW-0964">Secreted</keyword>
<keyword id="KW-0732">Signal</keyword>
<keyword id="KW-0808">Transferase</keyword>
<organism>
    <name type="scientific">Mycobacterium bovis (strain ATCC BAA-935 / AF2122/97)</name>
    <dbReference type="NCBI Taxonomy" id="233413"/>
    <lineage>
        <taxon>Bacteria</taxon>
        <taxon>Bacillati</taxon>
        <taxon>Actinomycetota</taxon>
        <taxon>Actinomycetes</taxon>
        <taxon>Mycobacteriales</taxon>
        <taxon>Mycobacteriaceae</taxon>
        <taxon>Mycobacterium</taxon>
        <taxon>Mycobacterium tuberculosis complex</taxon>
    </lineage>
</organism>
<protein>
    <recommendedName>
        <fullName>MPT51/MPB51 antigen</fullName>
    </recommendedName>
</protein>
<accession>P0A4V7</accession>
<accession>A0A1R3Y5B3</accession>
<accession>O33176</accession>
<accession>Q48923</accession>
<accession>X2BPV6</accession>
<proteinExistence type="inferred from homology"/>